<accession>A0QKU7</accession>
<sequence length="138" mass="14668">MPPAKKAAAAPKKGQKTRRREKKNVPHGAAHIKSTFNNTIVTITDPQGNVIAWASSGHVGFKGSRKSTPFAAQLAAENAARKAQEHGVRKVDVFVKGPGSGRETAIRSLQAAGLEVGAISDVTPQPHNGVRPPKRRRV</sequence>
<proteinExistence type="inferred from homology"/>
<organism>
    <name type="scientific">Mycobacterium avium (strain 104)</name>
    <dbReference type="NCBI Taxonomy" id="243243"/>
    <lineage>
        <taxon>Bacteria</taxon>
        <taxon>Bacillati</taxon>
        <taxon>Actinomycetota</taxon>
        <taxon>Actinomycetes</taxon>
        <taxon>Mycobacteriales</taxon>
        <taxon>Mycobacteriaceae</taxon>
        <taxon>Mycobacterium</taxon>
        <taxon>Mycobacterium avium complex (MAC)</taxon>
    </lineage>
</organism>
<evidence type="ECO:0000255" key="1">
    <source>
        <dbReference type="HAMAP-Rule" id="MF_01310"/>
    </source>
</evidence>
<evidence type="ECO:0000256" key="2">
    <source>
        <dbReference type="SAM" id="MobiDB-lite"/>
    </source>
</evidence>
<evidence type="ECO:0000305" key="3"/>
<feature type="chain" id="PRO_0000294794" description="Small ribosomal subunit protein uS11">
    <location>
        <begin position="1"/>
        <end position="138"/>
    </location>
</feature>
<feature type="region of interest" description="Disordered" evidence="2">
    <location>
        <begin position="1"/>
        <end position="27"/>
    </location>
</feature>
<feature type="compositionally biased region" description="Low complexity" evidence="2">
    <location>
        <begin position="1"/>
        <end position="12"/>
    </location>
</feature>
<feature type="compositionally biased region" description="Basic residues" evidence="2">
    <location>
        <begin position="13"/>
        <end position="22"/>
    </location>
</feature>
<dbReference type="EMBL" id="CP000479">
    <property type="protein sequence ID" value="ABK64778.1"/>
    <property type="molecule type" value="Genomic_DNA"/>
</dbReference>
<dbReference type="RefSeq" id="WP_003879486.1">
    <property type="nucleotide sequence ID" value="NC_008595.1"/>
</dbReference>
<dbReference type="SMR" id="A0QKU7"/>
<dbReference type="GeneID" id="75271914"/>
<dbReference type="KEGG" id="mav:MAV_4400"/>
<dbReference type="HOGENOM" id="CLU_072439_5_0_11"/>
<dbReference type="Proteomes" id="UP000001574">
    <property type="component" value="Chromosome"/>
</dbReference>
<dbReference type="GO" id="GO:1990904">
    <property type="term" value="C:ribonucleoprotein complex"/>
    <property type="evidence" value="ECO:0007669"/>
    <property type="project" value="UniProtKB-KW"/>
</dbReference>
<dbReference type="GO" id="GO:0005840">
    <property type="term" value="C:ribosome"/>
    <property type="evidence" value="ECO:0007669"/>
    <property type="project" value="UniProtKB-KW"/>
</dbReference>
<dbReference type="GO" id="GO:0019843">
    <property type="term" value="F:rRNA binding"/>
    <property type="evidence" value="ECO:0007669"/>
    <property type="project" value="UniProtKB-UniRule"/>
</dbReference>
<dbReference type="GO" id="GO:0003735">
    <property type="term" value="F:structural constituent of ribosome"/>
    <property type="evidence" value="ECO:0007669"/>
    <property type="project" value="InterPro"/>
</dbReference>
<dbReference type="GO" id="GO:0006412">
    <property type="term" value="P:translation"/>
    <property type="evidence" value="ECO:0007669"/>
    <property type="project" value="UniProtKB-UniRule"/>
</dbReference>
<dbReference type="FunFam" id="3.30.420.80:FF:000001">
    <property type="entry name" value="30S ribosomal protein S11"/>
    <property type="match status" value="1"/>
</dbReference>
<dbReference type="Gene3D" id="3.30.420.80">
    <property type="entry name" value="Ribosomal protein S11"/>
    <property type="match status" value="1"/>
</dbReference>
<dbReference type="HAMAP" id="MF_01310">
    <property type="entry name" value="Ribosomal_uS11"/>
    <property type="match status" value="1"/>
</dbReference>
<dbReference type="InterPro" id="IPR001971">
    <property type="entry name" value="Ribosomal_uS11"/>
</dbReference>
<dbReference type="InterPro" id="IPR019981">
    <property type="entry name" value="Ribosomal_uS11_bac-type"/>
</dbReference>
<dbReference type="InterPro" id="IPR018102">
    <property type="entry name" value="Ribosomal_uS11_CS"/>
</dbReference>
<dbReference type="InterPro" id="IPR036967">
    <property type="entry name" value="Ribosomal_uS11_sf"/>
</dbReference>
<dbReference type="NCBIfam" id="NF003698">
    <property type="entry name" value="PRK05309.1"/>
    <property type="match status" value="1"/>
</dbReference>
<dbReference type="NCBIfam" id="TIGR03632">
    <property type="entry name" value="uS11_bact"/>
    <property type="match status" value="1"/>
</dbReference>
<dbReference type="PANTHER" id="PTHR11759">
    <property type="entry name" value="40S RIBOSOMAL PROTEIN S14/30S RIBOSOMAL PROTEIN S11"/>
    <property type="match status" value="1"/>
</dbReference>
<dbReference type="Pfam" id="PF00411">
    <property type="entry name" value="Ribosomal_S11"/>
    <property type="match status" value="1"/>
</dbReference>
<dbReference type="PIRSF" id="PIRSF002131">
    <property type="entry name" value="Ribosomal_S11"/>
    <property type="match status" value="1"/>
</dbReference>
<dbReference type="SUPFAM" id="SSF53137">
    <property type="entry name" value="Translational machinery components"/>
    <property type="match status" value="1"/>
</dbReference>
<dbReference type="PROSITE" id="PS00054">
    <property type="entry name" value="RIBOSOMAL_S11"/>
    <property type="match status" value="1"/>
</dbReference>
<gene>
    <name evidence="1" type="primary">rpsK</name>
    <name type="ordered locus">MAV_4400</name>
</gene>
<comment type="function">
    <text evidence="1">Located on the platform of the 30S subunit, it bridges several disparate RNA helices of the 16S rRNA. Forms part of the Shine-Dalgarno cleft in the 70S ribosome.</text>
</comment>
<comment type="subunit">
    <text evidence="1">Part of the 30S ribosomal subunit. Interacts with proteins S7 and S18. Binds to IF-3.</text>
</comment>
<comment type="similarity">
    <text evidence="1">Belongs to the universal ribosomal protein uS11 family.</text>
</comment>
<keyword id="KW-0687">Ribonucleoprotein</keyword>
<keyword id="KW-0689">Ribosomal protein</keyword>
<keyword id="KW-0694">RNA-binding</keyword>
<keyword id="KW-0699">rRNA-binding</keyword>
<reference key="1">
    <citation type="submission" date="2006-10" db="EMBL/GenBank/DDBJ databases">
        <authorList>
            <person name="Fleischmann R.D."/>
            <person name="Dodson R.J."/>
            <person name="Haft D.H."/>
            <person name="Merkel J.S."/>
            <person name="Nelson W.C."/>
            <person name="Fraser C.M."/>
        </authorList>
    </citation>
    <scope>NUCLEOTIDE SEQUENCE [LARGE SCALE GENOMIC DNA]</scope>
    <source>
        <strain>104</strain>
    </source>
</reference>
<name>RS11_MYCA1</name>
<protein>
    <recommendedName>
        <fullName evidence="1">Small ribosomal subunit protein uS11</fullName>
    </recommendedName>
    <alternativeName>
        <fullName evidence="3">30S ribosomal protein S11</fullName>
    </alternativeName>
</protein>